<reference key="1">
    <citation type="journal article" date="2009" name="PLoS Genet.">
        <title>The complete genome and proteome of Laribacter hongkongensis reveal potential mechanisms for adaptations to different temperatures and habitats.</title>
        <authorList>
            <person name="Woo P.C.Y."/>
            <person name="Lau S.K.P."/>
            <person name="Tse H."/>
            <person name="Teng J.L.L."/>
            <person name="Curreem S.O."/>
            <person name="Tsang A.K.L."/>
            <person name="Fan R.Y.Y."/>
            <person name="Wong G.K.M."/>
            <person name="Huang Y."/>
            <person name="Loman N.J."/>
            <person name="Snyder L.A.S."/>
            <person name="Cai J.J."/>
            <person name="Huang J.-D."/>
            <person name="Mak W."/>
            <person name="Pallen M.J."/>
            <person name="Lok S."/>
            <person name="Yuen K.-Y."/>
        </authorList>
    </citation>
    <scope>NUCLEOTIDE SEQUENCE [LARGE SCALE GENOMIC DNA]</scope>
    <source>
        <strain>HLHK9</strain>
    </source>
</reference>
<organism>
    <name type="scientific">Laribacter hongkongensis (strain HLHK9)</name>
    <dbReference type="NCBI Taxonomy" id="557598"/>
    <lineage>
        <taxon>Bacteria</taxon>
        <taxon>Pseudomonadati</taxon>
        <taxon>Pseudomonadota</taxon>
        <taxon>Betaproteobacteria</taxon>
        <taxon>Neisseriales</taxon>
        <taxon>Aquaspirillaceae</taxon>
        <taxon>Laribacter</taxon>
    </lineage>
</organism>
<name>TRPC_LARHH</name>
<comment type="catalytic activity">
    <reaction evidence="1">
        <text>1-(2-carboxyphenylamino)-1-deoxy-D-ribulose 5-phosphate + H(+) = (1S,2R)-1-C-(indol-3-yl)glycerol 3-phosphate + CO2 + H2O</text>
        <dbReference type="Rhea" id="RHEA:23476"/>
        <dbReference type="ChEBI" id="CHEBI:15377"/>
        <dbReference type="ChEBI" id="CHEBI:15378"/>
        <dbReference type="ChEBI" id="CHEBI:16526"/>
        <dbReference type="ChEBI" id="CHEBI:58613"/>
        <dbReference type="ChEBI" id="CHEBI:58866"/>
        <dbReference type="EC" id="4.1.1.48"/>
    </reaction>
</comment>
<comment type="pathway">
    <text evidence="1">Amino-acid biosynthesis; L-tryptophan biosynthesis; L-tryptophan from chorismate: step 4/5.</text>
</comment>
<comment type="similarity">
    <text evidence="1">Belongs to the TrpC family.</text>
</comment>
<keyword id="KW-0028">Amino-acid biosynthesis</keyword>
<keyword id="KW-0057">Aromatic amino acid biosynthesis</keyword>
<keyword id="KW-0210">Decarboxylase</keyword>
<keyword id="KW-0456">Lyase</keyword>
<keyword id="KW-1185">Reference proteome</keyword>
<keyword id="KW-0822">Tryptophan biosynthesis</keyword>
<sequence length="263" mass="28272">MSDILEKILATKTEEVAAARKARPLASLRNDAETRRDIRDFAGALTRCQSAGRAGVIAEIKKASPSKGIIRPDFQPAAIAESYAGHGAACLSVLTDVRYFQGAADYLVAARDACDLPVLRKDFLVDEYQVFEARAMGADCILLIVAALDNARLADFEAIARELGMAVLVETHDAAELDRALRLASPLIGVNNRNLRTFDVSLDTTLSLLPVIQAEGRMAITESGISTPDDVIRMREAGVNSFLVGEAFMREADPGAALAHLFA</sequence>
<proteinExistence type="inferred from homology"/>
<protein>
    <recommendedName>
        <fullName evidence="1">Indole-3-glycerol phosphate synthase</fullName>
        <shortName evidence="1">IGPS</shortName>
        <ecNumber evidence="1">4.1.1.48</ecNumber>
    </recommendedName>
</protein>
<evidence type="ECO:0000255" key="1">
    <source>
        <dbReference type="HAMAP-Rule" id="MF_00134"/>
    </source>
</evidence>
<gene>
    <name evidence="1" type="primary">trpC</name>
    <name type="ordered locus">LHK_01448</name>
</gene>
<dbReference type="EC" id="4.1.1.48" evidence="1"/>
<dbReference type="EMBL" id="CP001154">
    <property type="protein sequence ID" value="ACO74437.1"/>
    <property type="molecule type" value="Genomic_DNA"/>
</dbReference>
<dbReference type="RefSeq" id="WP_012696923.1">
    <property type="nucleotide sequence ID" value="NC_012559.1"/>
</dbReference>
<dbReference type="SMR" id="C1D7J7"/>
<dbReference type="STRING" id="557598.LHK_01448"/>
<dbReference type="KEGG" id="lhk:LHK_01448"/>
<dbReference type="eggNOG" id="COG0134">
    <property type="taxonomic scope" value="Bacteria"/>
</dbReference>
<dbReference type="HOGENOM" id="CLU_034247_2_0_4"/>
<dbReference type="UniPathway" id="UPA00035">
    <property type="reaction ID" value="UER00043"/>
</dbReference>
<dbReference type="Proteomes" id="UP000002010">
    <property type="component" value="Chromosome"/>
</dbReference>
<dbReference type="GO" id="GO:0004425">
    <property type="term" value="F:indole-3-glycerol-phosphate synthase activity"/>
    <property type="evidence" value="ECO:0007669"/>
    <property type="project" value="UniProtKB-UniRule"/>
</dbReference>
<dbReference type="GO" id="GO:0004640">
    <property type="term" value="F:phosphoribosylanthranilate isomerase activity"/>
    <property type="evidence" value="ECO:0007669"/>
    <property type="project" value="TreeGrafter"/>
</dbReference>
<dbReference type="GO" id="GO:0000162">
    <property type="term" value="P:L-tryptophan biosynthetic process"/>
    <property type="evidence" value="ECO:0007669"/>
    <property type="project" value="UniProtKB-UniRule"/>
</dbReference>
<dbReference type="CDD" id="cd00331">
    <property type="entry name" value="IGPS"/>
    <property type="match status" value="1"/>
</dbReference>
<dbReference type="FunFam" id="3.20.20.70:FF:000024">
    <property type="entry name" value="Indole-3-glycerol phosphate synthase"/>
    <property type="match status" value="1"/>
</dbReference>
<dbReference type="Gene3D" id="3.20.20.70">
    <property type="entry name" value="Aldolase class I"/>
    <property type="match status" value="1"/>
</dbReference>
<dbReference type="HAMAP" id="MF_00134_B">
    <property type="entry name" value="IGPS_B"/>
    <property type="match status" value="1"/>
</dbReference>
<dbReference type="InterPro" id="IPR013785">
    <property type="entry name" value="Aldolase_TIM"/>
</dbReference>
<dbReference type="InterPro" id="IPR045186">
    <property type="entry name" value="Indole-3-glycerol_P_synth"/>
</dbReference>
<dbReference type="InterPro" id="IPR013798">
    <property type="entry name" value="Indole-3-glycerol_P_synth_dom"/>
</dbReference>
<dbReference type="InterPro" id="IPR001468">
    <property type="entry name" value="Indole-3-GlycerolPSynthase_CS"/>
</dbReference>
<dbReference type="InterPro" id="IPR011060">
    <property type="entry name" value="RibuloseP-bd_barrel"/>
</dbReference>
<dbReference type="NCBIfam" id="NF001370">
    <property type="entry name" value="PRK00278.1-2"/>
    <property type="match status" value="1"/>
</dbReference>
<dbReference type="NCBIfam" id="NF001373">
    <property type="entry name" value="PRK00278.1-6"/>
    <property type="match status" value="1"/>
</dbReference>
<dbReference type="NCBIfam" id="NF001377">
    <property type="entry name" value="PRK00278.2-4"/>
    <property type="match status" value="1"/>
</dbReference>
<dbReference type="PANTHER" id="PTHR22854:SF2">
    <property type="entry name" value="INDOLE-3-GLYCEROL-PHOSPHATE SYNTHASE"/>
    <property type="match status" value="1"/>
</dbReference>
<dbReference type="PANTHER" id="PTHR22854">
    <property type="entry name" value="TRYPTOPHAN BIOSYNTHESIS PROTEIN"/>
    <property type="match status" value="1"/>
</dbReference>
<dbReference type="Pfam" id="PF00218">
    <property type="entry name" value="IGPS"/>
    <property type="match status" value="1"/>
</dbReference>
<dbReference type="SUPFAM" id="SSF51366">
    <property type="entry name" value="Ribulose-phoshate binding barrel"/>
    <property type="match status" value="1"/>
</dbReference>
<dbReference type="PROSITE" id="PS00614">
    <property type="entry name" value="IGPS"/>
    <property type="match status" value="1"/>
</dbReference>
<accession>C1D7J7</accession>
<feature type="chain" id="PRO_1000198776" description="Indole-3-glycerol phosphate synthase">
    <location>
        <begin position="1"/>
        <end position="263"/>
    </location>
</feature>